<organism>
    <name type="scientific">Penaeus japonicus</name>
    <name type="common">Kuruma prawn</name>
    <name type="synonym">Marsupenaeus japonicus</name>
    <dbReference type="NCBI Taxonomy" id="27405"/>
    <lineage>
        <taxon>Eukaryota</taxon>
        <taxon>Metazoa</taxon>
        <taxon>Ecdysozoa</taxon>
        <taxon>Arthropoda</taxon>
        <taxon>Crustacea</taxon>
        <taxon>Multicrustacea</taxon>
        <taxon>Malacostraca</taxon>
        <taxon>Eumalacostraca</taxon>
        <taxon>Eucarida</taxon>
        <taxon>Decapoda</taxon>
        <taxon>Dendrobranchiata</taxon>
        <taxon>Penaeoidea</taxon>
        <taxon>Penaeidae</taxon>
        <taxon>Penaeus</taxon>
    </lineage>
</organism>
<protein>
    <recommendedName>
        <fullName>Crustacean hyperglycemic hormones 7</fullName>
    </recommendedName>
    <alternativeName>
        <fullName>Pej-SGP-VII</fullName>
    </alternativeName>
    <component>
        <recommendedName>
            <fullName>CHH precursor-related peptide 7</fullName>
            <shortName>CPRP 7</shortName>
        </recommendedName>
    </component>
    <component>
        <recommendedName>
            <fullName>Crustacean hyperglycemic hormone 7</fullName>
            <shortName>CHH 7</shortName>
        </recommendedName>
    </component>
</protein>
<dbReference type="EMBL" id="AB007509">
    <property type="protein sequence ID" value="BAA22562.1"/>
    <property type="molecule type" value="mRNA"/>
</dbReference>
<dbReference type="SMR" id="O15982"/>
<dbReference type="OrthoDB" id="6330469at2759"/>
<dbReference type="GO" id="GO:0005576">
    <property type="term" value="C:extracellular region"/>
    <property type="evidence" value="ECO:0007669"/>
    <property type="project" value="UniProtKB-SubCell"/>
</dbReference>
<dbReference type="GO" id="GO:0005184">
    <property type="term" value="F:neuropeptide hormone activity"/>
    <property type="evidence" value="ECO:0007669"/>
    <property type="project" value="InterPro"/>
</dbReference>
<dbReference type="GO" id="GO:0007623">
    <property type="term" value="P:circadian rhythm"/>
    <property type="evidence" value="ECO:0007669"/>
    <property type="project" value="TreeGrafter"/>
</dbReference>
<dbReference type="GO" id="GO:0006006">
    <property type="term" value="P:glucose metabolic process"/>
    <property type="evidence" value="ECO:0007669"/>
    <property type="project" value="UniProtKB-KW"/>
</dbReference>
<dbReference type="GO" id="GO:0007218">
    <property type="term" value="P:neuropeptide signaling pathway"/>
    <property type="evidence" value="ECO:0007669"/>
    <property type="project" value="UniProtKB-KW"/>
</dbReference>
<dbReference type="Gene3D" id="1.10.2010.10">
    <property type="entry name" value="Crustacean CHH/MIH/GIH neurohormone"/>
    <property type="match status" value="1"/>
</dbReference>
<dbReference type="InterPro" id="IPR018251">
    <property type="entry name" value="Crust_neurhormone_CS"/>
</dbReference>
<dbReference type="InterPro" id="IPR031098">
    <property type="entry name" value="Crust_neurohorm"/>
</dbReference>
<dbReference type="InterPro" id="IPR035957">
    <property type="entry name" value="Crust_neurohorm_sf"/>
</dbReference>
<dbReference type="InterPro" id="IPR001166">
    <property type="entry name" value="Hyperglycemic"/>
</dbReference>
<dbReference type="InterPro" id="IPR000346">
    <property type="entry name" value="Hyperglycemic1"/>
</dbReference>
<dbReference type="PANTHER" id="PTHR35981">
    <property type="entry name" value="ION TRANSPORT PEPTIDE, ISOFORM C"/>
    <property type="match status" value="1"/>
</dbReference>
<dbReference type="PANTHER" id="PTHR35981:SF2">
    <property type="entry name" value="ION TRANSPORT PEPTIDE, ISOFORM C"/>
    <property type="match status" value="1"/>
</dbReference>
<dbReference type="Pfam" id="PF01147">
    <property type="entry name" value="Crust_neurohorm"/>
    <property type="match status" value="1"/>
</dbReference>
<dbReference type="PRINTS" id="PR00548">
    <property type="entry name" value="HYPRGLYCEMC1"/>
</dbReference>
<dbReference type="PRINTS" id="PR00550">
    <property type="entry name" value="HYPRGLYCEMIC"/>
</dbReference>
<dbReference type="SUPFAM" id="SSF81778">
    <property type="entry name" value="Crustacean CHH/MIH/GIH neurohormone"/>
    <property type="match status" value="1"/>
</dbReference>
<dbReference type="PROSITE" id="PS01250">
    <property type="entry name" value="CHH_MIH_GIH"/>
    <property type="match status" value="1"/>
</dbReference>
<feature type="signal peptide" evidence="2">
    <location>
        <begin position="1"/>
        <end position="26"/>
    </location>
</feature>
<feature type="peptide" id="PRO_0000019059" description="CHH precursor-related peptide 7">
    <location>
        <begin position="27"/>
        <end position="46"/>
    </location>
</feature>
<feature type="peptide" id="PRO_0000019060" description="Crustacean hyperglycemic hormone 7">
    <location>
        <begin position="49"/>
        <end position="120"/>
    </location>
</feature>
<feature type="modified residue" description="Valine amide" evidence="1">
    <location>
        <position position="120"/>
    </location>
</feature>
<feature type="disulfide bond" evidence="1">
    <location>
        <begin position="55"/>
        <end position="91"/>
    </location>
</feature>
<feature type="disulfide bond" evidence="1">
    <location>
        <begin position="71"/>
        <end position="87"/>
    </location>
</feature>
<feature type="disulfide bond" evidence="1">
    <location>
        <begin position="74"/>
        <end position="100"/>
    </location>
</feature>
<comment type="function">
    <text>Hormone found in the sinus gland of isopods and decapods which controls the blood sugar level. Has a secretagogue action over the amylase released from the midgut gland. May act as a stress hormone and may be involved in the control of molting and reproduction.</text>
</comment>
<comment type="subcellular location">
    <subcellularLocation>
        <location>Secreted</location>
    </subcellularLocation>
</comment>
<comment type="tissue specificity">
    <text>Produced by the medulla terminalis X-organ in the eyestalks and transported to the sinus gland where they are stored and released.</text>
</comment>
<comment type="similarity">
    <text evidence="3">Belongs to the arthropod CHH/MIH/GIH/VIH hormone family.</text>
</comment>
<name>CHH7_PENJP</name>
<evidence type="ECO:0000250" key="1"/>
<evidence type="ECO:0000255" key="2"/>
<evidence type="ECO:0000305" key="3"/>
<keyword id="KW-0027">Amidation</keyword>
<keyword id="KW-0119">Carbohydrate metabolism</keyword>
<keyword id="KW-0165">Cleavage on pair of basic residues</keyword>
<keyword id="KW-1015">Disulfide bond</keyword>
<keyword id="KW-0313">Glucose metabolism</keyword>
<keyword id="KW-0372">Hormone</keyword>
<keyword id="KW-0527">Neuropeptide</keyword>
<keyword id="KW-0964">Secreted</keyword>
<keyword id="KW-0732">Signal</keyword>
<reference key="1">
    <citation type="book" date="1998" name="Proceedings of the XIII international congress of comparative endocrinology">
        <title>Molecular cloning of cDNAs encoding four crustacean hyperglycemic hormones and a molt-inhibiting hormone from the kuruma prawn Penaeus japonicus.</title>
        <authorList>
            <person name="Ohira T."/>
            <person name="Watanabe T."/>
            <person name="Nagasawa H."/>
            <person name="Aida K."/>
        </authorList>
    </citation>
    <scope>NUCLEOTIDE SEQUENCE [MRNA]</scope>
    <source>
        <tissue>Eyestalk</tissue>
    </source>
</reference>
<sequence length="122" mass="13583">MSLAMTAFRMMAVALVVVVASSTTWARSLEGSSSPVTSLTRGRSLNKRAAFDPSCTGVYDRELLGRLSRLCDDCYNVFREPKVAMECRSNCFFNPAFVQCLEYLIPAELHEEYQALVQTVGK</sequence>
<proteinExistence type="evidence at transcript level"/>
<accession>O15982</accession>